<keyword id="KW-0030">Aminoacyl-tRNA synthetase</keyword>
<keyword id="KW-0067">ATP-binding</keyword>
<keyword id="KW-0963">Cytoplasm</keyword>
<keyword id="KW-0436">Ligase</keyword>
<keyword id="KW-0460">Magnesium</keyword>
<keyword id="KW-0479">Metal-binding</keyword>
<keyword id="KW-0547">Nucleotide-binding</keyword>
<keyword id="KW-0648">Protein biosynthesis</keyword>
<evidence type="ECO:0000255" key="1">
    <source>
        <dbReference type="HAMAP-Rule" id="MF_00281"/>
    </source>
</evidence>
<proteinExistence type="inferred from homology"/>
<sequence length="340" mass="38940">MKERINQLLQEIGQCVAATVEEAEALRIKYLSKKGEIARLFDDFRLVPSEEKKQIGQMLNELKNKAQEHINSLRERAQAGSAQASAETDLTRTSYPTRLGTRHPISLVKQEICEIFARLGFSIADGPEIEDDWHVFSSMNFAEDHPARDMQDTFFIEHRPDVILRTHTSSVQSRVMEKTQPPIRVICPGRTYRNEAISYRAHCFFHQVEALYVDKDVSFADLRQVLLYFAQEMFGAETKIRLRPSYFPFTEPSAEMDISCNICGGKGCNFCKHTGWVEILGCGMVDPNVLDNCGIDSKKYSGYALGMGIERITNLKYRVKDLRFFSENDLNFLEQFKSVH</sequence>
<name>SYFA_PORG3</name>
<reference key="1">
    <citation type="journal article" date="2008" name="DNA Res.">
        <title>Determination of the genome sequence of Porphyromonas gingivalis strain ATCC 33277 and genomic comparison with strain W83 revealed extensive genome rearrangements in P. gingivalis.</title>
        <authorList>
            <person name="Naito M."/>
            <person name="Hirakawa H."/>
            <person name="Yamashita A."/>
            <person name="Ohara N."/>
            <person name="Shoji M."/>
            <person name="Yukitake H."/>
            <person name="Nakayama K."/>
            <person name="Toh H."/>
            <person name="Yoshimura F."/>
            <person name="Kuhara S."/>
            <person name="Hattori M."/>
            <person name="Hayashi T."/>
            <person name="Nakayama K."/>
        </authorList>
    </citation>
    <scope>NUCLEOTIDE SEQUENCE [LARGE SCALE GENOMIC DNA]</scope>
    <source>
        <strain>ATCC 33277 / DSM 20709 / CIP 103683 / JCM 12257 / NCTC 11834 / 2561</strain>
    </source>
</reference>
<protein>
    <recommendedName>
        <fullName evidence="1">Phenylalanine--tRNA ligase alpha subunit</fullName>
        <ecNumber evidence="1">6.1.1.20</ecNumber>
    </recommendedName>
    <alternativeName>
        <fullName evidence="1">Phenylalanyl-tRNA synthetase alpha subunit</fullName>
        <shortName evidence="1">PheRS</shortName>
    </alternativeName>
</protein>
<accession>B2RLI5</accession>
<dbReference type="EC" id="6.1.1.20" evidence="1"/>
<dbReference type="EMBL" id="AP009380">
    <property type="protein sequence ID" value="BAG34230.1"/>
    <property type="molecule type" value="Genomic_DNA"/>
</dbReference>
<dbReference type="RefSeq" id="WP_005873733.1">
    <property type="nucleotide sequence ID" value="NZ_CP025930.1"/>
</dbReference>
<dbReference type="SMR" id="B2RLI5"/>
<dbReference type="GeneID" id="29256875"/>
<dbReference type="KEGG" id="pgn:PGN_1711"/>
<dbReference type="eggNOG" id="COG0016">
    <property type="taxonomic scope" value="Bacteria"/>
</dbReference>
<dbReference type="HOGENOM" id="CLU_025086_0_1_10"/>
<dbReference type="OrthoDB" id="9800719at2"/>
<dbReference type="BioCyc" id="PGIN431947:G1G2V-1919-MONOMER"/>
<dbReference type="Proteomes" id="UP000008842">
    <property type="component" value="Chromosome"/>
</dbReference>
<dbReference type="GO" id="GO:0005737">
    <property type="term" value="C:cytoplasm"/>
    <property type="evidence" value="ECO:0007669"/>
    <property type="project" value="UniProtKB-SubCell"/>
</dbReference>
<dbReference type="GO" id="GO:0005524">
    <property type="term" value="F:ATP binding"/>
    <property type="evidence" value="ECO:0007669"/>
    <property type="project" value="UniProtKB-UniRule"/>
</dbReference>
<dbReference type="GO" id="GO:0000287">
    <property type="term" value="F:magnesium ion binding"/>
    <property type="evidence" value="ECO:0007669"/>
    <property type="project" value="UniProtKB-UniRule"/>
</dbReference>
<dbReference type="GO" id="GO:0004826">
    <property type="term" value="F:phenylalanine-tRNA ligase activity"/>
    <property type="evidence" value="ECO:0007669"/>
    <property type="project" value="UniProtKB-UniRule"/>
</dbReference>
<dbReference type="GO" id="GO:0000049">
    <property type="term" value="F:tRNA binding"/>
    <property type="evidence" value="ECO:0007669"/>
    <property type="project" value="InterPro"/>
</dbReference>
<dbReference type="GO" id="GO:0006432">
    <property type="term" value="P:phenylalanyl-tRNA aminoacylation"/>
    <property type="evidence" value="ECO:0007669"/>
    <property type="project" value="UniProtKB-UniRule"/>
</dbReference>
<dbReference type="CDD" id="cd00496">
    <property type="entry name" value="PheRS_alpha_core"/>
    <property type="match status" value="1"/>
</dbReference>
<dbReference type="Gene3D" id="3.30.930.10">
    <property type="entry name" value="Bira Bifunctional Protein, Domain 2"/>
    <property type="match status" value="1"/>
</dbReference>
<dbReference type="HAMAP" id="MF_00281">
    <property type="entry name" value="Phe_tRNA_synth_alpha1"/>
    <property type="match status" value="1"/>
</dbReference>
<dbReference type="InterPro" id="IPR006195">
    <property type="entry name" value="aa-tRNA-synth_II"/>
</dbReference>
<dbReference type="InterPro" id="IPR045864">
    <property type="entry name" value="aa-tRNA-synth_II/BPL/LPL"/>
</dbReference>
<dbReference type="InterPro" id="IPR004529">
    <property type="entry name" value="Phe-tRNA-synth_IIc_asu"/>
</dbReference>
<dbReference type="InterPro" id="IPR004188">
    <property type="entry name" value="Phe-tRNA_ligase_II_N"/>
</dbReference>
<dbReference type="InterPro" id="IPR022911">
    <property type="entry name" value="Phe_tRNA_ligase_alpha1_bac"/>
</dbReference>
<dbReference type="InterPro" id="IPR002319">
    <property type="entry name" value="Phenylalanyl-tRNA_Synthase"/>
</dbReference>
<dbReference type="InterPro" id="IPR010978">
    <property type="entry name" value="tRNA-bd_arm"/>
</dbReference>
<dbReference type="NCBIfam" id="TIGR00468">
    <property type="entry name" value="pheS"/>
    <property type="match status" value="1"/>
</dbReference>
<dbReference type="PANTHER" id="PTHR11538:SF41">
    <property type="entry name" value="PHENYLALANINE--TRNA LIGASE, MITOCHONDRIAL"/>
    <property type="match status" value="1"/>
</dbReference>
<dbReference type="PANTHER" id="PTHR11538">
    <property type="entry name" value="PHENYLALANYL-TRNA SYNTHETASE"/>
    <property type="match status" value="1"/>
</dbReference>
<dbReference type="Pfam" id="PF02912">
    <property type="entry name" value="Phe_tRNA-synt_N"/>
    <property type="match status" value="1"/>
</dbReference>
<dbReference type="Pfam" id="PF01409">
    <property type="entry name" value="tRNA-synt_2d"/>
    <property type="match status" value="1"/>
</dbReference>
<dbReference type="SUPFAM" id="SSF55681">
    <property type="entry name" value="Class II aaRS and biotin synthetases"/>
    <property type="match status" value="1"/>
</dbReference>
<dbReference type="SUPFAM" id="SSF46589">
    <property type="entry name" value="tRNA-binding arm"/>
    <property type="match status" value="1"/>
</dbReference>
<dbReference type="PROSITE" id="PS50862">
    <property type="entry name" value="AA_TRNA_LIGASE_II"/>
    <property type="match status" value="1"/>
</dbReference>
<gene>
    <name evidence="1" type="primary">pheS</name>
    <name type="ordered locus">PGN_1711</name>
</gene>
<organism>
    <name type="scientific">Porphyromonas gingivalis (strain ATCC 33277 / DSM 20709 / CIP 103683 / JCM 12257 / NCTC 11834 / 2561)</name>
    <dbReference type="NCBI Taxonomy" id="431947"/>
    <lineage>
        <taxon>Bacteria</taxon>
        <taxon>Pseudomonadati</taxon>
        <taxon>Bacteroidota</taxon>
        <taxon>Bacteroidia</taxon>
        <taxon>Bacteroidales</taxon>
        <taxon>Porphyromonadaceae</taxon>
        <taxon>Porphyromonas</taxon>
    </lineage>
</organism>
<feature type="chain" id="PRO_1000114899" description="Phenylalanine--tRNA ligase alpha subunit">
    <location>
        <begin position="1"/>
        <end position="340"/>
    </location>
</feature>
<feature type="binding site" evidence="1">
    <location>
        <position position="251"/>
    </location>
    <ligand>
        <name>Mg(2+)</name>
        <dbReference type="ChEBI" id="CHEBI:18420"/>
        <note>shared with beta subunit</note>
    </ligand>
</feature>
<comment type="catalytic activity">
    <reaction evidence="1">
        <text>tRNA(Phe) + L-phenylalanine + ATP = L-phenylalanyl-tRNA(Phe) + AMP + diphosphate + H(+)</text>
        <dbReference type="Rhea" id="RHEA:19413"/>
        <dbReference type="Rhea" id="RHEA-COMP:9668"/>
        <dbReference type="Rhea" id="RHEA-COMP:9699"/>
        <dbReference type="ChEBI" id="CHEBI:15378"/>
        <dbReference type="ChEBI" id="CHEBI:30616"/>
        <dbReference type="ChEBI" id="CHEBI:33019"/>
        <dbReference type="ChEBI" id="CHEBI:58095"/>
        <dbReference type="ChEBI" id="CHEBI:78442"/>
        <dbReference type="ChEBI" id="CHEBI:78531"/>
        <dbReference type="ChEBI" id="CHEBI:456215"/>
        <dbReference type="EC" id="6.1.1.20"/>
    </reaction>
</comment>
<comment type="cofactor">
    <cofactor evidence="1">
        <name>Mg(2+)</name>
        <dbReference type="ChEBI" id="CHEBI:18420"/>
    </cofactor>
    <text evidence="1">Binds 2 magnesium ions per tetramer.</text>
</comment>
<comment type="subunit">
    <text evidence="1">Tetramer of two alpha and two beta subunits.</text>
</comment>
<comment type="subcellular location">
    <subcellularLocation>
        <location evidence="1">Cytoplasm</location>
    </subcellularLocation>
</comment>
<comment type="similarity">
    <text evidence="1">Belongs to the class-II aminoacyl-tRNA synthetase family. Phe-tRNA synthetase alpha subunit type 1 subfamily.</text>
</comment>